<name>FEN1_PICST</name>
<keyword id="KW-0227">DNA damage</keyword>
<keyword id="KW-0234">DNA repair</keyword>
<keyword id="KW-0235">DNA replication</keyword>
<keyword id="KW-0255">Endonuclease</keyword>
<keyword id="KW-0269">Exonuclease</keyword>
<keyword id="KW-0378">Hydrolase</keyword>
<keyword id="KW-0460">Magnesium</keyword>
<keyword id="KW-0479">Metal-binding</keyword>
<keyword id="KW-0496">Mitochondrion</keyword>
<keyword id="KW-0540">Nuclease</keyword>
<keyword id="KW-0539">Nucleus</keyword>
<keyword id="KW-0597">Phosphoprotein</keyword>
<keyword id="KW-1185">Reference proteome</keyword>
<dbReference type="EC" id="3.1.-.-" evidence="1"/>
<dbReference type="EMBL" id="CP000502">
    <property type="protein sequence ID" value="ABN68459.2"/>
    <property type="molecule type" value="Genomic_DNA"/>
</dbReference>
<dbReference type="RefSeq" id="XP_001386488.2">
    <property type="nucleotide sequence ID" value="XM_001386451.1"/>
</dbReference>
<dbReference type="SMR" id="A3M056"/>
<dbReference type="FunCoup" id="A3M056">
    <property type="interactions" value="1091"/>
</dbReference>
<dbReference type="STRING" id="322104.A3M056"/>
<dbReference type="GeneID" id="4840943"/>
<dbReference type="KEGG" id="pic:PICST_33791"/>
<dbReference type="eggNOG" id="KOG2519">
    <property type="taxonomic scope" value="Eukaryota"/>
</dbReference>
<dbReference type="HOGENOM" id="CLU_032444_1_1_1"/>
<dbReference type="InParanoid" id="A3M056"/>
<dbReference type="OMA" id="MGIPWVQ"/>
<dbReference type="OrthoDB" id="1937206at2759"/>
<dbReference type="Proteomes" id="UP000002258">
    <property type="component" value="Chromosome 8"/>
</dbReference>
<dbReference type="GO" id="GO:0005739">
    <property type="term" value="C:mitochondrion"/>
    <property type="evidence" value="ECO:0007669"/>
    <property type="project" value="UniProtKB-SubCell"/>
</dbReference>
<dbReference type="GO" id="GO:0005730">
    <property type="term" value="C:nucleolus"/>
    <property type="evidence" value="ECO:0007669"/>
    <property type="project" value="UniProtKB-SubCell"/>
</dbReference>
<dbReference type="GO" id="GO:0005654">
    <property type="term" value="C:nucleoplasm"/>
    <property type="evidence" value="ECO:0007669"/>
    <property type="project" value="UniProtKB-SubCell"/>
</dbReference>
<dbReference type="GO" id="GO:0008409">
    <property type="term" value="F:5'-3' exonuclease activity"/>
    <property type="evidence" value="ECO:0007669"/>
    <property type="project" value="UniProtKB-UniRule"/>
</dbReference>
<dbReference type="GO" id="GO:0017108">
    <property type="term" value="F:5'-flap endonuclease activity"/>
    <property type="evidence" value="ECO:0007669"/>
    <property type="project" value="UniProtKB-UniRule"/>
</dbReference>
<dbReference type="GO" id="GO:0003677">
    <property type="term" value="F:DNA binding"/>
    <property type="evidence" value="ECO:0007669"/>
    <property type="project" value="UniProtKB-UniRule"/>
</dbReference>
<dbReference type="GO" id="GO:0000287">
    <property type="term" value="F:magnesium ion binding"/>
    <property type="evidence" value="ECO:0007669"/>
    <property type="project" value="UniProtKB-UniRule"/>
</dbReference>
<dbReference type="GO" id="GO:0006284">
    <property type="term" value="P:base-excision repair"/>
    <property type="evidence" value="ECO:0007669"/>
    <property type="project" value="UniProtKB-UniRule"/>
</dbReference>
<dbReference type="GO" id="GO:0043137">
    <property type="term" value="P:DNA replication, removal of RNA primer"/>
    <property type="evidence" value="ECO:0007669"/>
    <property type="project" value="UniProtKB-UniRule"/>
</dbReference>
<dbReference type="CDD" id="cd09867">
    <property type="entry name" value="PIN_FEN1"/>
    <property type="match status" value="1"/>
</dbReference>
<dbReference type="FunFam" id="1.10.150.20:FF:000009">
    <property type="entry name" value="Flap endonuclease 1"/>
    <property type="match status" value="1"/>
</dbReference>
<dbReference type="FunFam" id="3.40.50.1010:FF:000003">
    <property type="entry name" value="Flap endonuclease 1"/>
    <property type="match status" value="1"/>
</dbReference>
<dbReference type="Gene3D" id="1.10.150.20">
    <property type="entry name" value="5' to 3' exonuclease, C-terminal subdomain"/>
    <property type="match status" value="1"/>
</dbReference>
<dbReference type="Gene3D" id="3.40.50.1010">
    <property type="entry name" value="5'-nuclease"/>
    <property type="match status" value="1"/>
</dbReference>
<dbReference type="HAMAP" id="MF_00614">
    <property type="entry name" value="Fen"/>
    <property type="match status" value="1"/>
</dbReference>
<dbReference type="InterPro" id="IPR036279">
    <property type="entry name" value="5-3_exonuclease_C_sf"/>
</dbReference>
<dbReference type="InterPro" id="IPR023426">
    <property type="entry name" value="Flap_endonuc"/>
</dbReference>
<dbReference type="InterPro" id="IPR008918">
    <property type="entry name" value="HhH2"/>
</dbReference>
<dbReference type="InterPro" id="IPR029060">
    <property type="entry name" value="PIN-like_dom_sf"/>
</dbReference>
<dbReference type="InterPro" id="IPR006086">
    <property type="entry name" value="XPG-I_dom"/>
</dbReference>
<dbReference type="InterPro" id="IPR006084">
    <property type="entry name" value="XPG/Rad2"/>
</dbReference>
<dbReference type="InterPro" id="IPR019974">
    <property type="entry name" value="XPG_CS"/>
</dbReference>
<dbReference type="InterPro" id="IPR006085">
    <property type="entry name" value="XPG_DNA_repair_N"/>
</dbReference>
<dbReference type="PANTHER" id="PTHR11081:SF9">
    <property type="entry name" value="FLAP ENDONUCLEASE 1"/>
    <property type="match status" value="1"/>
</dbReference>
<dbReference type="PANTHER" id="PTHR11081">
    <property type="entry name" value="FLAP ENDONUCLEASE FAMILY MEMBER"/>
    <property type="match status" value="1"/>
</dbReference>
<dbReference type="Pfam" id="PF00867">
    <property type="entry name" value="XPG_I"/>
    <property type="match status" value="1"/>
</dbReference>
<dbReference type="Pfam" id="PF00752">
    <property type="entry name" value="XPG_N"/>
    <property type="match status" value="1"/>
</dbReference>
<dbReference type="PRINTS" id="PR00853">
    <property type="entry name" value="XPGRADSUPER"/>
</dbReference>
<dbReference type="SMART" id="SM00279">
    <property type="entry name" value="HhH2"/>
    <property type="match status" value="1"/>
</dbReference>
<dbReference type="SMART" id="SM00484">
    <property type="entry name" value="XPGI"/>
    <property type="match status" value="1"/>
</dbReference>
<dbReference type="SMART" id="SM00485">
    <property type="entry name" value="XPGN"/>
    <property type="match status" value="1"/>
</dbReference>
<dbReference type="SUPFAM" id="SSF47807">
    <property type="entry name" value="5' to 3' exonuclease, C-terminal subdomain"/>
    <property type="match status" value="1"/>
</dbReference>
<dbReference type="SUPFAM" id="SSF88723">
    <property type="entry name" value="PIN domain-like"/>
    <property type="match status" value="1"/>
</dbReference>
<dbReference type="PROSITE" id="PS00841">
    <property type="entry name" value="XPG_1"/>
    <property type="match status" value="1"/>
</dbReference>
<dbReference type="PROSITE" id="PS00842">
    <property type="entry name" value="XPG_2"/>
    <property type="match status" value="1"/>
</dbReference>
<sequence length="381" mass="42872">MGVKGLNQLIKEHSPGAFKEFQLKNLFGRKVAIDASMCLYQFLIAVRQSDGQQLTNESGETTSHLSGMFYRTIRMVENNIKPVYVFDGKPPVLKGGELEKRLLKREEAQKQIDSIKDTGTVAEVMKFEKRLVRVSREQNDEAKKLLELMGIPYVNAPCEAEAQCAELARTGKVFAAASEDMDTLCYEPPYLLRHLTFAEARKMPINQITYSEAIAGLEMTKPQFIDMCILLGCDYCETIKGVGPVTAYKLIKEHGSLEKIIEHINSNPTSKYKVPENWPYDEARQLFMDPEVTKGEEVTLKWKEPDVEGLIQYMVREKGFSEDRIRSGAEKLKKGLKTGVQGRLDGFFSVVAKPGAKAGDKKGDKKRGSDSKASNNKKKRK</sequence>
<comment type="function">
    <text evidence="1">Structure-specific nuclease with 5'-flap endonuclease and 5'-3' exonuclease activities involved in DNA replication and repair. During DNA replication, cleaves the 5'-overhanging flap structure that is generated by displacement synthesis when DNA polymerase encounters the 5'-end of a downstream Okazaki fragment. It enters the flap from the 5'-end and then tracks to cleave the flap base, leaving a nick for ligation. Also involved in the long patch base excision repair (LP-BER) pathway, by cleaving within the apurinic/apyrimidinic (AP) site-terminated flap. Acts as a genome stabilization factor that prevents flaps from equilibrating into structures that lead to duplications and deletions. Also possesses 5'-3' exonuclease activity on nicked or gapped double-stranded DNA, and exhibits RNase H activity. Also involved in replication and repair of rDNA and in repairing mitochondrial DNA.</text>
</comment>
<comment type="cofactor">
    <cofactor evidence="1">
        <name>Mg(2+)</name>
        <dbReference type="ChEBI" id="CHEBI:18420"/>
    </cofactor>
    <text evidence="1">Binds 2 magnesium ions per subunit. They probably participate in the reaction catalyzed by the enzyme. May bind an additional third magnesium ion after substrate binding.</text>
</comment>
<comment type="subunit">
    <text evidence="1">Interacts with PCNA. Three molecules of FEN1 bind to one PCNA trimer with each molecule binding to one PCNA monomer. PCNA stimulates the nuclease activity without altering cleavage specificity.</text>
</comment>
<comment type="subcellular location">
    <subcellularLocation>
        <location evidence="1">Nucleus</location>
        <location evidence="1">Nucleolus</location>
    </subcellularLocation>
    <subcellularLocation>
        <location evidence="1">Nucleus</location>
        <location evidence="1">Nucleoplasm</location>
    </subcellularLocation>
    <subcellularLocation>
        <location evidence="1">Mitochondrion</location>
    </subcellularLocation>
    <text evidence="1">Resides mostly in the nucleoli and relocalizes to the nucleoplasm upon DNA damage.</text>
</comment>
<comment type="PTM">
    <text evidence="1">Phosphorylated. Phosphorylation upon DNA damage induces relocalization to the nuclear plasma.</text>
</comment>
<comment type="similarity">
    <text evidence="1">Belongs to the XPG/RAD2 endonuclease family. FEN1 subfamily.</text>
</comment>
<evidence type="ECO:0000255" key="1">
    <source>
        <dbReference type="HAMAP-Rule" id="MF_03140"/>
    </source>
</evidence>
<evidence type="ECO:0000256" key="2">
    <source>
        <dbReference type="SAM" id="MobiDB-lite"/>
    </source>
</evidence>
<proteinExistence type="inferred from homology"/>
<organism>
    <name type="scientific">Scheffersomyces stipitis (strain ATCC 58785 / CBS 6054 / NBRC 10063 / NRRL Y-11545)</name>
    <name type="common">Yeast</name>
    <name type="synonym">Pichia stipitis</name>
    <dbReference type="NCBI Taxonomy" id="322104"/>
    <lineage>
        <taxon>Eukaryota</taxon>
        <taxon>Fungi</taxon>
        <taxon>Dikarya</taxon>
        <taxon>Ascomycota</taxon>
        <taxon>Saccharomycotina</taxon>
        <taxon>Pichiomycetes</taxon>
        <taxon>Debaryomycetaceae</taxon>
        <taxon>Scheffersomyces</taxon>
    </lineage>
</organism>
<reference key="1">
    <citation type="journal article" date="2007" name="Nat. Biotechnol.">
        <title>Genome sequence of the lignocellulose-bioconverting and xylose-fermenting yeast Pichia stipitis.</title>
        <authorList>
            <person name="Jeffries T.W."/>
            <person name="Grigoriev I.V."/>
            <person name="Grimwood J."/>
            <person name="Laplaza J.M."/>
            <person name="Aerts A."/>
            <person name="Salamov A."/>
            <person name="Schmutz J."/>
            <person name="Lindquist E."/>
            <person name="Dehal P."/>
            <person name="Shapiro H."/>
            <person name="Jin Y.-S."/>
            <person name="Passoth V."/>
            <person name="Richardson P.M."/>
        </authorList>
    </citation>
    <scope>NUCLEOTIDE SEQUENCE [LARGE SCALE GENOMIC DNA]</scope>
    <source>
        <strain>ATCC 58785 / CBS 6054 / NBRC 10063 / NRRL Y-11545</strain>
    </source>
</reference>
<protein>
    <recommendedName>
        <fullName evidence="1">Flap endonuclease 1</fullName>
        <shortName evidence="1">FEN-1</shortName>
        <ecNumber evidence="1">3.1.-.-</ecNumber>
    </recommendedName>
    <alternativeName>
        <fullName evidence="1">Flap structure-specific endonuclease 1</fullName>
    </alternativeName>
</protein>
<gene>
    <name evidence="1" type="primary">FEN1</name>
    <name type="ORF">PICST_33791</name>
</gene>
<feature type="chain" id="PRO_0000403594" description="Flap endonuclease 1">
    <location>
        <begin position="1"/>
        <end position="381"/>
    </location>
</feature>
<feature type="region of interest" description="N-domain">
    <location>
        <begin position="1"/>
        <end position="105"/>
    </location>
</feature>
<feature type="region of interest" description="I-domain">
    <location>
        <begin position="123"/>
        <end position="254"/>
    </location>
</feature>
<feature type="region of interest" description="Interaction with PCNA" evidence="1">
    <location>
        <begin position="340"/>
        <end position="348"/>
    </location>
</feature>
<feature type="region of interest" description="Disordered" evidence="2">
    <location>
        <begin position="354"/>
        <end position="381"/>
    </location>
</feature>
<feature type="compositionally biased region" description="Basic and acidic residues" evidence="2">
    <location>
        <begin position="358"/>
        <end position="370"/>
    </location>
</feature>
<feature type="binding site" evidence="1">
    <location>
        <position position="34"/>
    </location>
    <ligand>
        <name>Mg(2+)</name>
        <dbReference type="ChEBI" id="CHEBI:18420"/>
        <label>1</label>
    </ligand>
</feature>
<feature type="binding site" evidence="1">
    <location>
        <position position="47"/>
    </location>
    <ligand>
        <name>DNA</name>
        <dbReference type="ChEBI" id="CHEBI:16991"/>
    </ligand>
</feature>
<feature type="binding site" evidence="1">
    <location>
        <position position="71"/>
    </location>
    <ligand>
        <name>DNA</name>
        <dbReference type="ChEBI" id="CHEBI:16991"/>
    </ligand>
</feature>
<feature type="binding site" evidence="1">
    <location>
        <position position="87"/>
    </location>
    <ligand>
        <name>Mg(2+)</name>
        <dbReference type="ChEBI" id="CHEBI:18420"/>
        <label>1</label>
    </ligand>
</feature>
<feature type="binding site" evidence="1">
    <location>
        <position position="159"/>
    </location>
    <ligand>
        <name>DNA</name>
        <dbReference type="ChEBI" id="CHEBI:16991"/>
    </ligand>
</feature>
<feature type="binding site" evidence="1">
    <location>
        <position position="159"/>
    </location>
    <ligand>
        <name>Mg(2+)</name>
        <dbReference type="ChEBI" id="CHEBI:18420"/>
        <label>1</label>
    </ligand>
</feature>
<feature type="binding site" evidence="1">
    <location>
        <position position="161"/>
    </location>
    <ligand>
        <name>Mg(2+)</name>
        <dbReference type="ChEBI" id="CHEBI:18420"/>
        <label>1</label>
    </ligand>
</feature>
<feature type="binding site" evidence="1">
    <location>
        <position position="180"/>
    </location>
    <ligand>
        <name>Mg(2+)</name>
        <dbReference type="ChEBI" id="CHEBI:18420"/>
        <label>2</label>
    </ligand>
</feature>
<feature type="binding site" evidence="1">
    <location>
        <position position="182"/>
    </location>
    <ligand>
        <name>Mg(2+)</name>
        <dbReference type="ChEBI" id="CHEBI:18420"/>
        <label>2</label>
    </ligand>
</feature>
<feature type="binding site" evidence="1">
    <location>
        <position position="232"/>
    </location>
    <ligand>
        <name>DNA</name>
        <dbReference type="ChEBI" id="CHEBI:16991"/>
    </ligand>
</feature>
<feature type="binding site" evidence="1">
    <location>
        <position position="234"/>
    </location>
    <ligand>
        <name>DNA</name>
        <dbReference type="ChEBI" id="CHEBI:16991"/>
    </ligand>
</feature>
<feature type="binding site" evidence="1">
    <location>
        <position position="234"/>
    </location>
    <ligand>
        <name>Mg(2+)</name>
        <dbReference type="ChEBI" id="CHEBI:18420"/>
        <label>2</label>
    </ligand>
</feature>
<accession>A3M056</accession>